<reference key="1">
    <citation type="journal article" date="2003" name="Proc. Natl. Acad. Sci. U.S.A.">
        <title>The complete genome sequence of Mycobacterium bovis.</title>
        <authorList>
            <person name="Garnier T."/>
            <person name="Eiglmeier K."/>
            <person name="Camus J.-C."/>
            <person name="Medina N."/>
            <person name="Mansoor H."/>
            <person name="Pryor M."/>
            <person name="Duthoy S."/>
            <person name="Grondin S."/>
            <person name="Lacroix C."/>
            <person name="Monsempe C."/>
            <person name="Simon S."/>
            <person name="Harris B."/>
            <person name="Atkin R."/>
            <person name="Doggett J."/>
            <person name="Mayes R."/>
            <person name="Keating L."/>
            <person name="Wheeler P.R."/>
            <person name="Parkhill J."/>
            <person name="Barrell B.G."/>
            <person name="Cole S.T."/>
            <person name="Gordon S.V."/>
            <person name="Hewinson R.G."/>
        </authorList>
    </citation>
    <scope>NUCLEOTIDE SEQUENCE [LARGE SCALE GENOMIC DNA]</scope>
    <source>
        <strain>ATCC BAA-935 / AF2122/97</strain>
    </source>
</reference>
<reference key="2">
    <citation type="journal article" date="2017" name="Genome Announc.">
        <title>Updated reference genome sequence and annotation of Mycobacterium bovis AF2122/97.</title>
        <authorList>
            <person name="Malone K.M."/>
            <person name="Farrell D."/>
            <person name="Stuber T.P."/>
            <person name="Schubert O.T."/>
            <person name="Aebersold R."/>
            <person name="Robbe-Austerman S."/>
            <person name="Gordon S.V."/>
        </authorList>
    </citation>
    <scope>NUCLEOTIDE SEQUENCE [LARGE SCALE GENOMIC DNA]</scope>
    <scope>GENOME REANNOTATION</scope>
    <source>
        <strain>ATCC BAA-935 / AF2122/97</strain>
    </source>
</reference>
<feature type="chain" id="PRO_0000104088" description="VapC ribonuclease Mb2897">
    <location>
        <begin position="1"/>
        <end position="147"/>
    </location>
</feature>
<feature type="domain" description="PINc" evidence="1">
    <location>
        <begin position="3"/>
        <end position="139"/>
    </location>
</feature>
<feature type="binding site" evidence="1">
    <location>
        <position position="5"/>
    </location>
    <ligand>
        <name>Mg(2+)</name>
        <dbReference type="ChEBI" id="CHEBI:18420"/>
    </ligand>
</feature>
<feature type="binding site" evidence="1">
    <location>
        <position position="108"/>
    </location>
    <ligand>
        <name>Mg(2+)</name>
        <dbReference type="ChEBI" id="CHEBI:18420"/>
    </ligand>
</feature>
<name>VAPC9_MYCBO</name>
<keyword id="KW-0378">Hydrolase</keyword>
<keyword id="KW-0460">Magnesium</keyword>
<keyword id="KW-0479">Metal-binding</keyword>
<keyword id="KW-0540">Nuclease</keyword>
<keyword id="KW-1185">Reference proteome</keyword>
<keyword id="KW-1277">Toxin-antitoxin system</keyword>
<protein>
    <recommendedName>
        <fullName>VapC ribonuclease Mb2897</fullName>
        <shortName>RNase Mb2897</shortName>
        <ecNumber evidence="1">3.1.-.-</ecNumber>
    </recommendedName>
    <alternativeName>
        <fullName>Toxin Mb2897</fullName>
    </alternativeName>
</protein>
<accession>P65044</accession>
<accession>A0A1R3Y2V5</accession>
<accession>Q10800</accession>
<accession>X2BLV0</accession>
<evidence type="ECO:0000255" key="1">
    <source>
        <dbReference type="HAMAP-Rule" id="MF_00265"/>
    </source>
</evidence>
<proteinExistence type="inferred from homology"/>
<comment type="function">
    <text evidence="1">Toxic component of a type II toxin-antitoxin (TA) system. An RNase.</text>
</comment>
<comment type="cofactor">
    <cofactor evidence="1">
        <name>Mg(2+)</name>
        <dbReference type="ChEBI" id="CHEBI:18420"/>
    </cofactor>
</comment>
<comment type="similarity">
    <text evidence="1">Belongs to the PINc/VapC protein family.</text>
</comment>
<dbReference type="EC" id="3.1.-.-" evidence="1"/>
<dbReference type="EMBL" id="LT708304">
    <property type="protein sequence ID" value="SIU01518.1"/>
    <property type="molecule type" value="Genomic_DNA"/>
</dbReference>
<dbReference type="RefSeq" id="NP_856542.1">
    <property type="nucleotide sequence ID" value="NC_002945.3"/>
</dbReference>
<dbReference type="RefSeq" id="WP_003414624.1">
    <property type="nucleotide sequence ID" value="NC_002945.4"/>
</dbReference>
<dbReference type="SMR" id="P65044"/>
<dbReference type="KEGG" id="mbo:BQ2027_MB2897"/>
<dbReference type="PATRIC" id="fig|233413.5.peg.3179"/>
<dbReference type="Proteomes" id="UP000001419">
    <property type="component" value="Chromosome"/>
</dbReference>
<dbReference type="GO" id="GO:0000287">
    <property type="term" value="F:magnesium ion binding"/>
    <property type="evidence" value="ECO:0007669"/>
    <property type="project" value="UniProtKB-UniRule"/>
</dbReference>
<dbReference type="GO" id="GO:0004540">
    <property type="term" value="F:RNA nuclease activity"/>
    <property type="evidence" value="ECO:0007669"/>
    <property type="project" value="InterPro"/>
</dbReference>
<dbReference type="GO" id="GO:0045926">
    <property type="term" value="P:negative regulation of growth"/>
    <property type="evidence" value="ECO:0007669"/>
    <property type="project" value="UniProtKB-ARBA"/>
</dbReference>
<dbReference type="Gene3D" id="3.40.50.1010">
    <property type="entry name" value="5'-nuclease"/>
    <property type="match status" value="1"/>
</dbReference>
<dbReference type="HAMAP" id="MF_00265">
    <property type="entry name" value="VapC_Nob1"/>
    <property type="match status" value="1"/>
</dbReference>
<dbReference type="InterPro" id="IPR006226">
    <property type="entry name" value="Mtu_PIN"/>
</dbReference>
<dbReference type="InterPro" id="IPR029060">
    <property type="entry name" value="PIN-like_dom_sf"/>
</dbReference>
<dbReference type="InterPro" id="IPR002716">
    <property type="entry name" value="PIN_dom"/>
</dbReference>
<dbReference type="InterPro" id="IPR022907">
    <property type="entry name" value="VapC_family"/>
</dbReference>
<dbReference type="NCBIfam" id="TIGR00028">
    <property type="entry name" value="Mtu_PIN_fam"/>
    <property type="match status" value="1"/>
</dbReference>
<dbReference type="Pfam" id="PF01850">
    <property type="entry name" value="PIN"/>
    <property type="match status" value="1"/>
</dbReference>
<dbReference type="SUPFAM" id="SSF88723">
    <property type="entry name" value="PIN domain-like"/>
    <property type="match status" value="1"/>
</dbReference>
<sequence>MLCVDVNVLVYAHRADLREHADYRGLLERLANDDEPLGLPDSVLAGFIRVVTNRRVFTEPTSPQDAWQAVDALLAAPAAMRLRPGERHWMAFRQLASDVDANGNDIADAHLAAYALENNATWLSADRGFARFRRLRWRHPLDGQTHL</sequence>
<organism>
    <name type="scientific">Mycobacterium bovis (strain ATCC BAA-935 / AF2122/97)</name>
    <dbReference type="NCBI Taxonomy" id="233413"/>
    <lineage>
        <taxon>Bacteria</taxon>
        <taxon>Bacillati</taxon>
        <taxon>Actinomycetota</taxon>
        <taxon>Actinomycetes</taxon>
        <taxon>Mycobacteriales</taxon>
        <taxon>Mycobacteriaceae</taxon>
        <taxon>Mycobacterium</taxon>
        <taxon>Mycobacterium tuberculosis complex</taxon>
    </lineage>
</organism>
<gene>
    <name type="ordered locus">BQ2027_MB2897</name>
</gene>